<name>ABLM3_MOUSE</name>
<proteinExistence type="evidence at protein level"/>
<evidence type="ECO:0000250" key="1"/>
<evidence type="ECO:0000250" key="2">
    <source>
        <dbReference type="UniProtKB" id="O94929"/>
    </source>
</evidence>
<evidence type="ECO:0000255" key="3">
    <source>
        <dbReference type="PROSITE-ProRule" id="PRU00125"/>
    </source>
</evidence>
<evidence type="ECO:0000255" key="4">
    <source>
        <dbReference type="PROSITE-ProRule" id="PRU00595"/>
    </source>
</evidence>
<evidence type="ECO:0000256" key="5">
    <source>
        <dbReference type="SAM" id="MobiDB-lite"/>
    </source>
</evidence>
<evidence type="ECO:0000269" key="6">
    <source>
    </source>
</evidence>
<evidence type="ECO:0000305" key="7"/>
<evidence type="ECO:0007744" key="8">
    <source>
    </source>
</evidence>
<evidence type="ECO:0007744" key="9">
    <source>
    </source>
</evidence>
<evidence type="ECO:0007744" key="10">
    <source>
    </source>
</evidence>
<gene>
    <name type="primary">Ablim3</name>
    <name type="synonym">Kiaa0843</name>
</gene>
<dbReference type="EMBL" id="AK173040">
    <property type="protein sequence ID" value="BAD32318.1"/>
    <property type="status" value="ALT_INIT"/>
    <property type="molecule type" value="mRNA"/>
</dbReference>
<dbReference type="EMBL" id="BC060275">
    <property type="protein sequence ID" value="AAH60275.1"/>
    <property type="molecule type" value="mRNA"/>
</dbReference>
<dbReference type="EMBL" id="BC094229">
    <property type="protein sequence ID" value="AAH94229.1"/>
    <property type="molecule type" value="mRNA"/>
</dbReference>
<dbReference type="CCDS" id="CCDS37839.1"/>
<dbReference type="RefSeq" id="NP_001157963.1">
    <property type="nucleotide sequence ID" value="NM_001164491.1"/>
</dbReference>
<dbReference type="RefSeq" id="NP_941051.2">
    <property type="nucleotide sequence ID" value="NM_198649.3"/>
</dbReference>
<dbReference type="BMRB" id="Q69ZX8"/>
<dbReference type="SMR" id="Q69ZX8"/>
<dbReference type="BioGRID" id="235467">
    <property type="interactions" value="4"/>
</dbReference>
<dbReference type="FunCoup" id="Q69ZX8">
    <property type="interactions" value="102"/>
</dbReference>
<dbReference type="IntAct" id="Q69ZX8">
    <property type="interactions" value="2"/>
</dbReference>
<dbReference type="MINT" id="Q69ZX8"/>
<dbReference type="STRING" id="10090.ENSMUSP00000041243"/>
<dbReference type="GlyGen" id="Q69ZX8">
    <property type="glycosylation" value="19 sites, 2 N-linked glycans (2 sites), 1 O-linked glycan (17 sites)"/>
</dbReference>
<dbReference type="iPTMnet" id="Q69ZX8"/>
<dbReference type="PhosphoSitePlus" id="Q69ZX8"/>
<dbReference type="SwissPalm" id="Q69ZX8"/>
<dbReference type="jPOST" id="Q69ZX8"/>
<dbReference type="PaxDb" id="10090-ENSMUSP00000041243"/>
<dbReference type="PeptideAtlas" id="Q69ZX8"/>
<dbReference type="ProteomicsDB" id="286063"/>
<dbReference type="Antibodypedia" id="1195">
    <property type="antibodies" value="155 antibodies from 23 providers"/>
</dbReference>
<dbReference type="DNASU" id="319713"/>
<dbReference type="Ensembl" id="ENSMUST00000049378.15">
    <property type="protein sequence ID" value="ENSMUSP00000041243.9"/>
    <property type="gene ID" value="ENSMUSG00000032735.16"/>
</dbReference>
<dbReference type="Ensembl" id="ENSMUST00000166783.3">
    <property type="protein sequence ID" value="ENSMUSP00000125836.2"/>
    <property type="gene ID" value="ENSMUSG00000032735.16"/>
</dbReference>
<dbReference type="GeneID" id="319713"/>
<dbReference type="KEGG" id="mmu:319713"/>
<dbReference type="UCSC" id="uc008fct.2">
    <property type="organism name" value="mouse"/>
</dbReference>
<dbReference type="AGR" id="MGI:2442582"/>
<dbReference type="CTD" id="22885"/>
<dbReference type="MGI" id="MGI:2442582">
    <property type="gene designation" value="Ablim3"/>
</dbReference>
<dbReference type="VEuPathDB" id="HostDB:ENSMUSG00000032735"/>
<dbReference type="eggNOG" id="KOG1044">
    <property type="taxonomic scope" value="Eukaryota"/>
</dbReference>
<dbReference type="GeneTree" id="ENSGT00950000182850"/>
<dbReference type="HOGENOM" id="CLU_001357_12_3_1"/>
<dbReference type="InParanoid" id="Q69ZX8"/>
<dbReference type="OMA" id="NNHFHIQ"/>
<dbReference type="OrthoDB" id="1746725at2759"/>
<dbReference type="PhylomeDB" id="Q69ZX8"/>
<dbReference type="TreeFam" id="TF318042"/>
<dbReference type="BioGRID-ORCS" id="319713">
    <property type="hits" value="0 hits in 77 CRISPR screens"/>
</dbReference>
<dbReference type="CD-CODE" id="CE726F99">
    <property type="entry name" value="Postsynaptic density"/>
</dbReference>
<dbReference type="ChiTaRS" id="Ablim3">
    <property type="organism name" value="mouse"/>
</dbReference>
<dbReference type="PRO" id="PR:Q69ZX8"/>
<dbReference type="Proteomes" id="UP000000589">
    <property type="component" value="Chromosome 18"/>
</dbReference>
<dbReference type="RNAct" id="Q69ZX8">
    <property type="molecule type" value="protein"/>
</dbReference>
<dbReference type="Bgee" id="ENSMUSG00000032735">
    <property type="expression patterns" value="Expressed in embryonic brain and 196 other cell types or tissues"/>
</dbReference>
<dbReference type="GO" id="GO:0005737">
    <property type="term" value="C:cytoplasm"/>
    <property type="evidence" value="ECO:0007669"/>
    <property type="project" value="UniProtKB-SubCell"/>
</dbReference>
<dbReference type="GO" id="GO:0098978">
    <property type="term" value="C:glutamatergic synapse"/>
    <property type="evidence" value="ECO:0000314"/>
    <property type="project" value="SynGO"/>
</dbReference>
<dbReference type="GO" id="GO:0030027">
    <property type="term" value="C:lamellipodium"/>
    <property type="evidence" value="ECO:0000266"/>
    <property type="project" value="MGI"/>
</dbReference>
<dbReference type="GO" id="GO:0001725">
    <property type="term" value="C:stress fiber"/>
    <property type="evidence" value="ECO:0000266"/>
    <property type="project" value="MGI"/>
</dbReference>
<dbReference type="GO" id="GO:0045202">
    <property type="term" value="C:synapse"/>
    <property type="evidence" value="ECO:0000314"/>
    <property type="project" value="SynGO"/>
</dbReference>
<dbReference type="GO" id="GO:0003779">
    <property type="term" value="F:actin binding"/>
    <property type="evidence" value="ECO:0007669"/>
    <property type="project" value="InterPro"/>
</dbReference>
<dbReference type="GO" id="GO:0046872">
    <property type="term" value="F:metal ion binding"/>
    <property type="evidence" value="ECO:0007669"/>
    <property type="project" value="UniProtKB-KW"/>
</dbReference>
<dbReference type="GO" id="GO:0060271">
    <property type="term" value="P:cilium assembly"/>
    <property type="evidence" value="ECO:0000266"/>
    <property type="project" value="MGI"/>
</dbReference>
<dbReference type="GO" id="GO:0007010">
    <property type="term" value="P:cytoskeleton organization"/>
    <property type="evidence" value="ECO:0007669"/>
    <property type="project" value="InterPro"/>
</dbReference>
<dbReference type="GO" id="GO:0030032">
    <property type="term" value="P:lamellipodium assembly"/>
    <property type="evidence" value="ECO:0000266"/>
    <property type="project" value="MGI"/>
</dbReference>
<dbReference type="GO" id="GO:0045944">
    <property type="term" value="P:positive regulation of transcription by RNA polymerase II"/>
    <property type="evidence" value="ECO:0000315"/>
    <property type="project" value="MGI"/>
</dbReference>
<dbReference type="GO" id="GO:0006366">
    <property type="term" value="P:transcription by RNA polymerase II"/>
    <property type="evidence" value="ECO:0000315"/>
    <property type="project" value="MGI"/>
</dbReference>
<dbReference type="CDD" id="cd09327">
    <property type="entry name" value="LIM1_abLIM"/>
    <property type="match status" value="1"/>
</dbReference>
<dbReference type="CDD" id="cd09328">
    <property type="entry name" value="LIM2_abLIM"/>
    <property type="match status" value="1"/>
</dbReference>
<dbReference type="CDD" id="cd09329">
    <property type="entry name" value="LIM3_abLIM"/>
    <property type="match status" value="1"/>
</dbReference>
<dbReference type="CDD" id="cd09330">
    <property type="entry name" value="LIM4_abLIM"/>
    <property type="match status" value="1"/>
</dbReference>
<dbReference type="FunFam" id="2.10.110.10:FF:000003">
    <property type="entry name" value="actin-binding LIM protein 1 isoform X1"/>
    <property type="match status" value="1"/>
</dbReference>
<dbReference type="FunFam" id="2.10.110.10:FF:000004">
    <property type="entry name" value="actin-binding LIM protein 1 isoform X1"/>
    <property type="match status" value="1"/>
</dbReference>
<dbReference type="FunFam" id="2.10.110.10:FF:000007">
    <property type="entry name" value="actin-binding LIM protein 1 isoform X1"/>
    <property type="match status" value="1"/>
</dbReference>
<dbReference type="FunFam" id="2.10.110.10:FF:000024">
    <property type="entry name" value="actin-binding LIM protein 1 isoform X1"/>
    <property type="match status" value="1"/>
</dbReference>
<dbReference type="FunFam" id="1.10.950.10:FF:000001">
    <property type="entry name" value="actin-binding LIM protein 1 isoform X2"/>
    <property type="match status" value="1"/>
</dbReference>
<dbReference type="Gene3D" id="2.10.110.10">
    <property type="entry name" value="Cysteine Rich Protein"/>
    <property type="match status" value="4"/>
</dbReference>
<dbReference type="Gene3D" id="1.10.950.10">
    <property type="entry name" value="Villin headpiece domain"/>
    <property type="match status" value="1"/>
</dbReference>
<dbReference type="InterPro" id="IPR032402">
    <property type="entry name" value="AbLIM_anchor"/>
</dbReference>
<dbReference type="InterPro" id="IPR051618">
    <property type="entry name" value="Actin-binding_LIM"/>
</dbReference>
<dbReference type="InterPro" id="IPR003128">
    <property type="entry name" value="Villin_headpiece"/>
</dbReference>
<dbReference type="InterPro" id="IPR036886">
    <property type="entry name" value="Villin_headpiece_dom_sf"/>
</dbReference>
<dbReference type="InterPro" id="IPR001781">
    <property type="entry name" value="Znf_LIM"/>
</dbReference>
<dbReference type="PANTHER" id="PTHR24213">
    <property type="entry name" value="ACTIN-BINDING LIM PROTEIN"/>
    <property type="match status" value="1"/>
</dbReference>
<dbReference type="PANTHER" id="PTHR24213:SF0">
    <property type="entry name" value="ACTIN-BINDING LIM PROTEIN 3"/>
    <property type="match status" value="1"/>
</dbReference>
<dbReference type="Pfam" id="PF16182">
    <property type="entry name" value="AbLIM_anchor"/>
    <property type="match status" value="1"/>
</dbReference>
<dbReference type="Pfam" id="PF00412">
    <property type="entry name" value="LIM"/>
    <property type="match status" value="4"/>
</dbReference>
<dbReference type="Pfam" id="PF02209">
    <property type="entry name" value="VHP"/>
    <property type="match status" value="1"/>
</dbReference>
<dbReference type="SMART" id="SM00132">
    <property type="entry name" value="LIM"/>
    <property type="match status" value="4"/>
</dbReference>
<dbReference type="SMART" id="SM00153">
    <property type="entry name" value="VHP"/>
    <property type="match status" value="1"/>
</dbReference>
<dbReference type="SUPFAM" id="SSF57716">
    <property type="entry name" value="Glucocorticoid receptor-like (DNA-binding domain)"/>
    <property type="match status" value="6"/>
</dbReference>
<dbReference type="SUPFAM" id="SSF47050">
    <property type="entry name" value="VHP, Villin headpiece domain"/>
    <property type="match status" value="1"/>
</dbReference>
<dbReference type="PROSITE" id="PS51089">
    <property type="entry name" value="HP"/>
    <property type="match status" value="1"/>
</dbReference>
<dbReference type="PROSITE" id="PS00478">
    <property type="entry name" value="LIM_DOMAIN_1"/>
    <property type="match status" value="4"/>
</dbReference>
<dbReference type="PROSITE" id="PS50023">
    <property type="entry name" value="LIM_DOMAIN_2"/>
    <property type="match status" value="4"/>
</dbReference>
<keyword id="KW-0007">Acetylation</keyword>
<keyword id="KW-0963">Cytoplasm</keyword>
<keyword id="KW-0440">LIM domain</keyword>
<keyword id="KW-0479">Metal-binding</keyword>
<keyword id="KW-0488">Methylation</keyword>
<keyword id="KW-0597">Phosphoprotein</keyword>
<keyword id="KW-1185">Reference proteome</keyword>
<keyword id="KW-0677">Repeat</keyword>
<keyword id="KW-0862">Zinc</keyword>
<protein>
    <recommendedName>
        <fullName>Actin-binding LIM protein 3</fullName>
        <shortName>abLIM-3</shortName>
    </recommendedName>
    <alternativeName>
        <fullName>Actin-binding LIM protein family member 3</fullName>
    </alternativeName>
</protein>
<accession>Q69ZX8</accession>
<accession>Q52KR1</accession>
<accession>Q6PAI7</accession>
<comment type="function">
    <text>May act as scaffold protein. May stimulate ABRA activity and ABRA-dependent SRF transcriptional activity.</text>
</comment>
<comment type="subunit">
    <text evidence="1">Directly interacts with F-actin and ABRA.</text>
</comment>
<comment type="subcellular location">
    <subcellularLocation>
        <location evidence="1">Cytoplasm</location>
    </subcellularLocation>
</comment>
<comment type="tissue specificity">
    <text evidence="6">Expressed in heart, brain, lung and liver. In the brain, highly expressed in the olfactory bulb. In the hippocampus, expressed selectively in the CA2 and CA3 fields. In the cerebellum, expressed in internal granular cells.</text>
</comment>
<comment type="developmental stage">
    <text evidence="6">At 15.5 dpc, expressed in skeletal muscle. Down-regulated in adult skeletal muscle.</text>
</comment>
<comment type="sequence caution" evidence="7">
    <conflict type="erroneous initiation">
        <sequence resource="EMBL-CDS" id="BAD32318"/>
    </conflict>
</comment>
<reference key="1">
    <citation type="journal article" date="2004" name="DNA Res.">
        <title>Prediction of the coding sequences of mouse homologues of KIAA gene: IV. The complete nucleotide sequences of 500 mouse KIAA-homologous cDNAs identified by screening of terminal sequences of cDNA clones randomly sampled from size-fractionated libraries.</title>
        <authorList>
            <person name="Okazaki N."/>
            <person name="Kikuno R."/>
            <person name="Ohara R."/>
            <person name="Inamoto S."/>
            <person name="Koseki H."/>
            <person name="Hiraoka S."/>
            <person name="Saga Y."/>
            <person name="Seino S."/>
            <person name="Nishimura M."/>
            <person name="Kaisho T."/>
            <person name="Hoshino K."/>
            <person name="Kitamura H."/>
            <person name="Nagase T."/>
            <person name="Ohara O."/>
            <person name="Koga H."/>
        </authorList>
    </citation>
    <scope>NUCLEOTIDE SEQUENCE [LARGE SCALE MRNA]</scope>
    <source>
        <tissue>Fetal brain</tissue>
    </source>
</reference>
<reference key="2">
    <citation type="journal article" date="2004" name="Genome Res.">
        <title>The status, quality, and expansion of the NIH full-length cDNA project: the Mammalian Gene Collection (MGC).</title>
        <authorList>
            <consortium name="The MGC Project Team"/>
        </authorList>
    </citation>
    <scope>NUCLEOTIDE SEQUENCE [LARGE SCALE MRNA]</scope>
    <source>
        <strain>C57BL/6J</strain>
        <tissue>Brain</tissue>
    </source>
</reference>
<reference key="3">
    <citation type="journal article" date="2006" name="Mol. Cell. Proteomics">
        <title>Comprehensive identification of phosphorylation sites in postsynaptic density preparations.</title>
        <authorList>
            <person name="Trinidad J.C."/>
            <person name="Specht C.G."/>
            <person name="Thalhammer A."/>
            <person name="Schoepfer R."/>
            <person name="Burlingame A.L."/>
        </authorList>
    </citation>
    <scope>IDENTIFICATION BY MASS SPECTROMETRY [LARGE SCALE ANALYSIS]</scope>
    <source>
        <tissue>Brain</tissue>
    </source>
</reference>
<reference key="4">
    <citation type="journal article" date="2007" name="J. Biol. Chem.">
        <title>Two novel members of the ABLIM protein family, ABLIM-2 and -3, associate with STARS and directly bind F-actin.</title>
        <authorList>
            <person name="Barrientos T."/>
            <person name="Frank D."/>
            <person name="Kuwahara K."/>
            <person name="Bezprozvannaya S."/>
            <person name="Pipes G.C.T."/>
            <person name="Bassel-Duby R."/>
            <person name="Richardson J.A."/>
            <person name="Katus H.A."/>
            <person name="Olson E.N."/>
            <person name="Frey N."/>
        </authorList>
    </citation>
    <scope>TISSUE SPECIFICITY</scope>
    <scope>DEVELOPMENTAL STAGE</scope>
</reference>
<reference key="5">
    <citation type="journal article" date="2007" name="Proc. Natl. Acad. Sci. U.S.A.">
        <title>Large-scale phosphorylation analysis of mouse liver.</title>
        <authorList>
            <person name="Villen J."/>
            <person name="Beausoleil S.A."/>
            <person name="Gerber S.A."/>
            <person name="Gygi S.P."/>
        </authorList>
    </citation>
    <scope>PHOSPHORYLATION [LARGE SCALE ANALYSIS] AT SER-277; SER-280; SER-502 AND THR-542</scope>
    <scope>IDENTIFICATION BY MASS SPECTROMETRY [LARGE SCALE ANALYSIS]</scope>
    <source>
        <tissue>Liver</tissue>
    </source>
</reference>
<reference key="6">
    <citation type="journal article" date="2010" name="Cell">
        <title>A tissue-specific atlas of mouse protein phosphorylation and expression.</title>
        <authorList>
            <person name="Huttlin E.L."/>
            <person name="Jedrychowski M.P."/>
            <person name="Elias J.E."/>
            <person name="Goswami T."/>
            <person name="Rad R."/>
            <person name="Beausoleil S.A."/>
            <person name="Villen J."/>
            <person name="Haas W."/>
            <person name="Sowa M.E."/>
            <person name="Gygi S.P."/>
        </authorList>
    </citation>
    <scope>PHOSPHORYLATION [LARGE SCALE ANALYSIS] AT SER-280; SER-282; SER-290; SER-337; SER-372; SER-373; SER-379; SER-502; SER-503; THR-542; SER-566; SER-575 AND SER-606</scope>
    <scope>IDENTIFICATION BY MASS SPECTROMETRY [LARGE SCALE ANALYSIS]</scope>
    <source>
        <tissue>Brain</tissue>
        <tissue>Brown adipose tissue</tissue>
        <tissue>Heart</tissue>
        <tissue>Kidney</tissue>
        <tissue>Liver</tissue>
        <tissue>Lung</tissue>
        <tissue>Testis</tissue>
    </source>
</reference>
<reference key="7">
    <citation type="journal article" date="2014" name="Mol. Cell. Proteomics">
        <title>Immunoaffinity enrichment and mass spectrometry analysis of protein methylation.</title>
        <authorList>
            <person name="Guo A."/>
            <person name="Gu H."/>
            <person name="Zhou J."/>
            <person name="Mulhern D."/>
            <person name="Wang Y."/>
            <person name="Lee K.A."/>
            <person name="Yang V."/>
            <person name="Aguiar M."/>
            <person name="Kornhauser J."/>
            <person name="Jia X."/>
            <person name="Ren J."/>
            <person name="Beausoleil S.A."/>
            <person name="Silva J.C."/>
            <person name="Vemulapalli V."/>
            <person name="Bedford M.T."/>
            <person name="Comb M.J."/>
        </authorList>
    </citation>
    <scope>METHYLATION [LARGE SCALE ANALYSIS] AT ARG-630</scope>
    <scope>IDENTIFICATION BY MASS SPECTROMETRY [LARGE SCALE ANALYSIS]</scope>
    <source>
        <tissue>Brain</tissue>
    </source>
</reference>
<sequence>MNTSIPYQQSPYSPRGGSNVIQCYRCGDTCKGEVVRVHNNHFHIRCFTCQVCGCGLAQSGFFFKNQEYICTQDYQQLYGTRCDSCRDFITGEVISALGRTYHPKCFVCSLCRKPFPIGDKVTFSGKECVCQTCSQSMTSSKPIKIRGPSHCAGCKEEIKHGQSLLALDKQWHVSCFKCQTCSVILTGEYISKDGVPYCESDYHSQFGIKCETCDRYISGRVLEAGGKHYHPTCARCVRCHQMFTEGEEMYLTGSEVWHPICKQAARAEKKLKHRRTSETSISPPGSSIGSPNRVICAKVDNEILNYKDLAALPKVKSIYEVQRPDLISYEPHSRYTSDEMLERCGYGESLGTLSPYSQDIYENLDLRQRRASSPGYIDSPTYSRQGMSPTFSRSPHYYRSGPESGRSSPYHSQLDVRSSTPTSYQAPKHFHIPAGESNIYRKPPIYKRHGDLSTATKSKTSEDISQASKYSPAYSPDPYYASESEYWTYHGSPKVPRARRFSSGGEEEDFDRSMHKLQSGIGRLILKEEMKARSSSYADPWTPPRSSTSSREALHTTGYEMSFNGSPRSHYLADSDPLISKSASLPAYRRNGLHRTPSADLFHYDSMNAVNWGMREYKIYPYELLLVTTRGRNRLPKDVDRTRLERHLSQEEFYQVFGMTISEFERLALWKRNELKKQARLF</sequence>
<feature type="chain" id="PRO_0000075703" description="Actin-binding LIM protein 3">
    <location>
        <begin position="1"/>
        <end position="682"/>
    </location>
</feature>
<feature type="domain" description="LIM zinc-binding 1" evidence="3">
    <location>
        <begin position="21"/>
        <end position="80"/>
    </location>
</feature>
<feature type="domain" description="LIM zinc-binding 2" evidence="3">
    <location>
        <begin position="80"/>
        <end position="140"/>
    </location>
</feature>
<feature type="domain" description="LIM zinc-binding 3" evidence="3">
    <location>
        <begin position="149"/>
        <end position="208"/>
    </location>
</feature>
<feature type="domain" description="LIM zinc-binding 4" evidence="3">
    <location>
        <begin position="208"/>
        <end position="268"/>
    </location>
</feature>
<feature type="domain" description="HP" evidence="4">
    <location>
        <begin position="614"/>
        <end position="682"/>
    </location>
</feature>
<feature type="region of interest" description="Disordered" evidence="5">
    <location>
        <begin position="372"/>
        <end position="426"/>
    </location>
</feature>
<feature type="region of interest" description="Disordered" evidence="5">
    <location>
        <begin position="440"/>
        <end position="475"/>
    </location>
</feature>
<feature type="compositionally biased region" description="Polar residues" evidence="5">
    <location>
        <begin position="380"/>
        <end position="393"/>
    </location>
</feature>
<feature type="compositionally biased region" description="Polar residues" evidence="5">
    <location>
        <begin position="405"/>
        <end position="425"/>
    </location>
</feature>
<feature type="compositionally biased region" description="Polar residues" evidence="5">
    <location>
        <begin position="453"/>
        <end position="466"/>
    </location>
</feature>
<feature type="modified residue" description="N-acetylmethionine" evidence="2">
    <location>
        <position position="1"/>
    </location>
</feature>
<feature type="modified residue" description="Phosphoserine" evidence="8">
    <location>
        <position position="277"/>
    </location>
</feature>
<feature type="modified residue" description="Phosphoserine" evidence="8 9">
    <location>
        <position position="280"/>
    </location>
</feature>
<feature type="modified residue" description="Phosphoserine" evidence="9">
    <location>
        <position position="282"/>
    </location>
</feature>
<feature type="modified residue" description="Phosphoserine" evidence="2">
    <location>
        <position position="286"/>
    </location>
</feature>
<feature type="modified residue" description="Phosphoserine" evidence="9">
    <location>
        <position position="290"/>
    </location>
</feature>
<feature type="modified residue" description="Phosphoserine" evidence="9">
    <location>
        <position position="337"/>
    </location>
</feature>
<feature type="modified residue" description="Phosphoserine" evidence="9">
    <location>
        <position position="372"/>
    </location>
</feature>
<feature type="modified residue" description="Phosphoserine" evidence="9">
    <location>
        <position position="373"/>
    </location>
</feature>
<feature type="modified residue" description="Phosphotyrosine" evidence="2">
    <location>
        <position position="376"/>
    </location>
</feature>
<feature type="modified residue" description="Phosphoserine" evidence="9">
    <location>
        <position position="379"/>
    </location>
</feature>
<feature type="modified residue" description="Phosphoserine" evidence="2">
    <location>
        <position position="388"/>
    </location>
</feature>
<feature type="modified residue" description="Phosphoserine" evidence="2">
    <location>
        <position position="492"/>
    </location>
</feature>
<feature type="modified residue" description="Phosphoserine" evidence="8 9">
    <location>
        <position position="502"/>
    </location>
</feature>
<feature type="modified residue" description="Phosphoserine" evidence="9">
    <location>
        <position position="503"/>
    </location>
</feature>
<feature type="modified residue" description="Phosphothreonine" evidence="8 9">
    <location>
        <position position="542"/>
    </location>
</feature>
<feature type="modified residue" description="Phosphoserine" evidence="9">
    <location>
        <position position="566"/>
    </location>
</feature>
<feature type="modified residue" description="Phosphoserine" evidence="9">
    <location>
        <position position="575"/>
    </location>
</feature>
<feature type="modified residue" description="Phosphoserine" evidence="9">
    <location>
        <position position="606"/>
    </location>
</feature>
<feature type="modified residue" description="Omega-N-methylarginine" evidence="10">
    <location>
        <position position="630"/>
    </location>
</feature>
<feature type="sequence conflict" description="In Ref. 2; AAH60275." evidence="7" ref="2">
    <original>T</original>
    <variation>I</variation>
    <location>
        <position position="381"/>
    </location>
</feature>
<organism>
    <name type="scientific">Mus musculus</name>
    <name type="common">Mouse</name>
    <dbReference type="NCBI Taxonomy" id="10090"/>
    <lineage>
        <taxon>Eukaryota</taxon>
        <taxon>Metazoa</taxon>
        <taxon>Chordata</taxon>
        <taxon>Craniata</taxon>
        <taxon>Vertebrata</taxon>
        <taxon>Euteleostomi</taxon>
        <taxon>Mammalia</taxon>
        <taxon>Eutheria</taxon>
        <taxon>Euarchontoglires</taxon>
        <taxon>Glires</taxon>
        <taxon>Rodentia</taxon>
        <taxon>Myomorpha</taxon>
        <taxon>Muroidea</taxon>
        <taxon>Muridae</taxon>
        <taxon>Murinae</taxon>
        <taxon>Mus</taxon>
        <taxon>Mus</taxon>
    </lineage>
</organism>